<name>LPXD_CHRFK</name>
<organism>
    <name type="scientific">Christiangramia forsetii (strain DSM 17595 / CGMCC 1.15422 / KT0803)</name>
    <name type="common">Gramella forsetii</name>
    <dbReference type="NCBI Taxonomy" id="411154"/>
    <lineage>
        <taxon>Bacteria</taxon>
        <taxon>Pseudomonadati</taxon>
        <taxon>Bacteroidota</taxon>
        <taxon>Flavobacteriia</taxon>
        <taxon>Flavobacteriales</taxon>
        <taxon>Flavobacteriaceae</taxon>
        <taxon>Christiangramia</taxon>
    </lineage>
</organism>
<comment type="function">
    <text evidence="1">Catalyzes the N-acylation of UDP-3-O-acylglucosamine using 3-hydroxyacyl-ACP as the acyl donor. Is involved in the biosynthesis of lipid A, a phosphorylated glycolipid that anchors the lipopolysaccharide to the outer membrane of the cell.</text>
</comment>
<comment type="catalytic activity">
    <reaction evidence="1">
        <text>a UDP-3-O-[(3R)-3-hydroxyacyl]-alpha-D-glucosamine + a (3R)-hydroxyacyl-[ACP] = a UDP-2-N,3-O-bis[(3R)-3-hydroxyacyl]-alpha-D-glucosamine + holo-[ACP] + H(+)</text>
        <dbReference type="Rhea" id="RHEA:53836"/>
        <dbReference type="Rhea" id="RHEA-COMP:9685"/>
        <dbReference type="Rhea" id="RHEA-COMP:9945"/>
        <dbReference type="ChEBI" id="CHEBI:15378"/>
        <dbReference type="ChEBI" id="CHEBI:64479"/>
        <dbReference type="ChEBI" id="CHEBI:78827"/>
        <dbReference type="ChEBI" id="CHEBI:137740"/>
        <dbReference type="ChEBI" id="CHEBI:137748"/>
        <dbReference type="EC" id="2.3.1.191"/>
    </reaction>
</comment>
<comment type="pathway">
    <text evidence="1">Bacterial outer membrane biogenesis; LPS lipid A biosynthesis.</text>
</comment>
<comment type="subunit">
    <text evidence="1">Homotrimer.</text>
</comment>
<comment type="similarity">
    <text evidence="1">Belongs to the transferase hexapeptide repeat family. LpxD subfamily.</text>
</comment>
<gene>
    <name evidence="1" type="primary">lpxD</name>
    <name type="ordered locus">GFO_1776</name>
</gene>
<evidence type="ECO:0000255" key="1">
    <source>
        <dbReference type="HAMAP-Rule" id="MF_00523"/>
    </source>
</evidence>
<sequence>MKFTATQIAEILDGKVEGNPEAEVSELAKIEEGSEGSLTFLSNPKYTSFLYTTNASVTIVNDDFEVEQPVNTTLIKVKDAYKAFSTLLEYYNQIKLNKSGIEQPSHISESAKYGEGLYLGAFAYIGENVSIGENVKIYPNVYIGDNVKIGNNVTLFPGVKVYSESLIGSEVTIHSGVVIGADGFGFSPGDTGEYSKVPQIGNVIIEDYVDIGAGTTIDRATLGSTIIRKGAKLDNHIQIAHNVEIGENTAIAAQTGIAGSTKIGKNCLIGGQVGIAGHLTIGNRVKIQAQSGIGRDIKDDEMLQGSPAIGYSDYNKSYIHFKNLPKTMNIIHQLEKKINNG</sequence>
<proteinExistence type="inferred from homology"/>
<reference key="1">
    <citation type="journal article" date="2006" name="Environ. Microbiol.">
        <title>Whole genome analysis of the marine Bacteroidetes'Gramella forsetii' reveals adaptations to degradation of polymeric organic matter.</title>
        <authorList>
            <person name="Bauer M."/>
            <person name="Kube M."/>
            <person name="Teeling H."/>
            <person name="Richter M."/>
            <person name="Lombardot T."/>
            <person name="Allers E."/>
            <person name="Wuerdemann C.A."/>
            <person name="Quast C."/>
            <person name="Kuhl H."/>
            <person name="Knaust F."/>
            <person name="Woebken D."/>
            <person name="Bischof K."/>
            <person name="Mussmann M."/>
            <person name="Choudhuri J.V."/>
            <person name="Meyer F."/>
            <person name="Reinhardt R."/>
            <person name="Amann R.I."/>
            <person name="Gloeckner F.O."/>
        </authorList>
    </citation>
    <scope>NUCLEOTIDE SEQUENCE [LARGE SCALE GENOMIC DNA]</scope>
    <source>
        <strain>DSM 17595 / CGMCC 1.15422 / KT0803</strain>
    </source>
</reference>
<protein>
    <recommendedName>
        <fullName evidence="1">UDP-3-O-acylglucosamine N-acyltransferase</fullName>
        <ecNumber evidence="1">2.3.1.191</ecNumber>
    </recommendedName>
</protein>
<accession>A0M2A1</accession>
<feature type="chain" id="PRO_1000050941" description="UDP-3-O-acylglucosamine N-acyltransferase">
    <location>
        <begin position="1"/>
        <end position="341"/>
    </location>
</feature>
<feature type="active site" description="Proton acceptor" evidence="1">
    <location>
        <position position="241"/>
    </location>
</feature>
<keyword id="KW-0012">Acyltransferase</keyword>
<keyword id="KW-0441">Lipid A biosynthesis</keyword>
<keyword id="KW-0444">Lipid biosynthesis</keyword>
<keyword id="KW-0443">Lipid metabolism</keyword>
<keyword id="KW-0677">Repeat</keyword>
<keyword id="KW-0808">Transferase</keyword>
<dbReference type="EC" id="2.3.1.191" evidence="1"/>
<dbReference type="EMBL" id="CU207366">
    <property type="protein sequence ID" value="CAL66746.1"/>
    <property type="molecule type" value="Genomic_DNA"/>
</dbReference>
<dbReference type="RefSeq" id="WP_011709654.1">
    <property type="nucleotide sequence ID" value="NC_008571.1"/>
</dbReference>
<dbReference type="SMR" id="A0M2A1"/>
<dbReference type="STRING" id="411154.GFO_1776"/>
<dbReference type="KEGG" id="gfo:GFO_1776"/>
<dbReference type="eggNOG" id="COG1044">
    <property type="taxonomic scope" value="Bacteria"/>
</dbReference>
<dbReference type="HOGENOM" id="CLU_049865_0_0_10"/>
<dbReference type="OrthoDB" id="9784739at2"/>
<dbReference type="UniPathway" id="UPA00973"/>
<dbReference type="Proteomes" id="UP000000755">
    <property type="component" value="Chromosome"/>
</dbReference>
<dbReference type="GO" id="GO:0016020">
    <property type="term" value="C:membrane"/>
    <property type="evidence" value="ECO:0007669"/>
    <property type="project" value="GOC"/>
</dbReference>
<dbReference type="GO" id="GO:0016410">
    <property type="term" value="F:N-acyltransferase activity"/>
    <property type="evidence" value="ECO:0007669"/>
    <property type="project" value="InterPro"/>
</dbReference>
<dbReference type="GO" id="GO:0009245">
    <property type="term" value="P:lipid A biosynthetic process"/>
    <property type="evidence" value="ECO:0007669"/>
    <property type="project" value="UniProtKB-UniRule"/>
</dbReference>
<dbReference type="CDD" id="cd03352">
    <property type="entry name" value="LbH_LpxD"/>
    <property type="match status" value="1"/>
</dbReference>
<dbReference type="Gene3D" id="2.160.10.10">
    <property type="entry name" value="Hexapeptide repeat proteins"/>
    <property type="match status" value="1"/>
</dbReference>
<dbReference type="Gene3D" id="3.40.1390.10">
    <property type="entry name" value="MurE/MurF, N-terminal domain"/>
    <property type="match status" value="1"/>
</dbReference>
<dbReference type="HAMAP" id="MF_00523">
    <property type="entry name" value="LpxD"/>
    <property type="match status" value="1"/>
</dbReference>
<dbReference type="InterPro" id="IPR001451">
    <property type="entry name" value="Hexapep"/>
</dbReference>
<dbReference type="InterPro" id="IPR018357">
    <property type="entry name" value="Hexapep_transf_CS"/>
</dbReference>
<dbReference type="InterPro" id="IPR007691">
    <property type="entry name" value="LpxD"/>
</dbReference>
<dbReference type="InterPro" id="IPR011004">
    <property type="entry name" value="Trimer_LpxA-like_sf"/>
</dbReference>
<dbReference type="InterPro" id="IPR020573">
    <property type="entry name" value="UDP_GlcNAc_AcTrfase_non-rep"/>
</dbReference>
<dbReference type="NCBIfam" id="TIGR01853">
    <property type="entry name" value="lipid_A_lpxD"/>
    <property type="match status" value="1"/>
</dbReference>
<dbReference type="NCBIfam" id="NF002060">
    <property type="entry name" value="PRK00892.1"/>
    <property type="match status" value="1"/>
</dbReference>
<dbReference type="PANTHER" id="PTHR43378">
    <property type="entry name" value="UDP-3-O-ACYLGLUCOSAMINE N-ACYLTRANSFERASE"/>
    <property type="match status" value="1"/>
</dbReference>
<dbReference type="PANTHER" id="PTHR43378:SF2">
    <property type="entry name" value="UDP-3-O-ACYLGLUCOSAMINE N-ACYLTRANSFERASE 1, MITOCHONDRIAL-RELATED"/>
    <property type="match status" value="1"/>
</dbReference>
<dbReference type="Pfam" id="PF00132">
    <property type="entry name" value="Hexapep"/>
    <property type="match status" value="2"/>
</dbReference>
<dbReference type="Pfam" id="PF04613">
    <property type="entry name" value="LpxD"/>
    <property type="match status" value="1"/>
</dbReference>
<dbReference type="SUPFAM" id="SSF51161">
    <property type="entry name" value="Trimeric LpxA-like enzymes"/>
    <property type="match status" value="1"/>
</dbReference>
<dbReference type="PROSITE" id="PS00101">
    <property type="entry name" value="HEXAPEP_TRANSFERASES"/>
    <property type="match status" value="1"/>
</dbReference>